<keyword id="KW-0028">Amino-acid biosynthesis</keyword>
<keyword id="KW-0055">Arginine biosynthesis</keyword>
<keyword id="KW-0963">Cytoplasm</keyword>
<keyword id="KW-0456">Lyase</keyword>
<keyword id="KW-1185">Reference proteome</keyword>
<evidence type="ECO:0000255" key="1">
    <source>
        <dbReference type="HAMAP-Rule" id="MF_00006"/>
    </source>
</evidence>
<protein>
    <recommendedName>
        <fullName evidence="1">Argininosuccinate lyase</fullName>
        <shortName evidence="1">ASAL</shortName>
        <ecNumber evidence="1">4.3.2.1</ecNumber>
    </recommendedName>
    <alternativeName>
        <fullName evidence="1">Arginosuccinase</fullName>
    </alternativeName>
</protein>
<name>ARLY_RALN1</name>
<comment type="catalytic activity">
    <reaction evidence="1">
        <text>2-(N(omega)-L-arginino)succinate = fumarate + L-arginine</text>
        <dbReference type="Rhea" id="RHEA:24020"/>
        <dbReference type="ChEBI" id="CHEBI:29806"/>
        <dbReference type="ChEBI" id="CHEBI:32682"/>
        <dbReference type="ChEBI" id="CHEBI:57472"/>
        <dbReference type="EC" id="4.3.2.1"/>
    </reaction>
</comment>
<comment type="pathway">
    <text evidence="1">Amino-acid biosynthesis; L-arginine biosynthesis; L-arginine from L-ornithine and carbamoyl phosphate: step 3/3.</text>
</comment>
<comment type="subcellular location">
    <subcellularLocation>
        <location evidence="1">Cytoplasm</location>
    </subcellularLocation>
</comment>
<comment type="similarity">
    <text evidence="1">Belongs to the lyase 1 family. Argininosuccinate lyase subfamily.</text>
</comment>
<reference key="1">
    <citation type="journal article" date="2002" name="Nature">
        <title>Genome sequence of the plant pathogen Ralstonia solanacearum.</title>
        <authorList>
            <person name="Salanoubat M."/>
            <person name="Genin S."/>
            <person name="Artiguenave F."/>
            <person name="Gouzy J."/>
            <person name="Mangenot S."/>
            <person name="Arlat M."/>
            <person name="Billault A."/>
            <person name="Brottier P."/>
            <person name="Camus J.-C."/>
            <person name="Cattolico L."/>
            <person name="Chandler M."/>
            <person name="Choisne N."/>
            <person name="Claudel-Renard C."/>
            <person name="Cunnac S."/>
            <person name="Demange N."/>
            <person name="Gaspin C."/>
            <person name="Lavie M."/>
            <person name="Moisan A."/>
            <person name="Robert C."/>
            <person name="Saurin W."/>
            <person name="Schiex T."/>
            <person name="Siguier P."/>
            <person name="Thebault P."/>
            <person name="Whalen M."/>
            <person name="Wincker P."/>
            <person name="Levy M."/>
            <person name="Weissenbach J."/>
            <person name="Boucher C.A."/>
        </authorList>
    </citation>
    <scope>NUCLEOTIDE SEQUENCE [LARGE SCALE GENOMIC DNA]</scope>
    <source>
        <strain>ATCC BAA-1114 / GMI1000</strain>
    </source>
</reference>
<sequence length="471" mass="51488">MTSQLAKKAEAWSARFNEPMSDLVKRYTASVFFDKRLALFDIQGSLAHAAMLAKQGIIAEADRAAIEQGMAQIRQEIEAGTFEWKLDLEDVHLNIEARLTAMAGDAGKRLHTGRSRNDQVATDIRLWLRSEIDNIVGLLRALRGALLDLAEQHTNTIVPGFTHLQVAQPVVFGHHLLAYVEMFTRDTERMLDARKRVNRLPLGAAALAGTSYPIDREFVAQQLGFDGVCRNSLDAVSDRDFAIEFCAAAALVMTHISRFSEELVLWMSPRVGFIDIADRFCTGSSIMPQKKNPDVPELARGKTGRVNGHLIGLLTLMKGQPLAYNKDNQEDKEPLFDTVDTVVDTLRIFADMVPGITVKADAMRAAALQGYATATDLADYLVKRGLPFRDAHEAVAHAVRACDDLRCDLADLSVTQLREISGLGDKANLIGDDVHAVLTLEGSVASRNHIGGTAPEQVRLAIVAARAGLAG</sequence>
<proteinExistence type="inferred from homology"/>
<feature type="chain" id="PRO_0000137809" description="Argininosuccinate lyase">
    <location>
        <begin position="1"/>
        <end position="471"/>
    </location>
</feature>
<dbReference type="EC" id="4.3.2.1" evidence="1"/>
<dbReference type="EMBL" id="AL646052">
    <property type="protein sequence ID" value="CAD16070.1"/>
    <property type="molecule type" value="Genomic_DNA"/>
</dbReference>
<dbReference type="RefSeq" id="WP_011002286.1">
    <property type="nucleotide sequence ID" value="NC_003295.1"/>
</dbReference>
<dbReference type="SMR" id="Q8XWV7"/>
<dbReference type="STRING" id="267608.RSc2363"/>
<dbReference type="EnsemblBacteria" id="CAD16070">
    <property type="protein sequence ID" value="CAD16070"/>
    <property type="gene ID" value="RSc2363"/>
</dbReference>
<dbReference type="KEGG" id="rso:RSc2363"/>
<dbReference type="PATRIC" id="fig|267608.8.peg.2402"/>
<dbReference type="eggNOG" id="COG0165">
    <property type="taxonomic scope" value="Bacteria"/>
</dbReference>
<dbReference type="HOGENOM" id="CLU_027272_2_3_4"/>
<dbReference type="UniPathway" id="UPA00068">
    <property type="reaction ID" value="UER00114"/>
</dbReference>
<dbReference type="Proteomes" id="UP000001436">
    <property type="component" value="Chromosome"/>
</dbReference>
<dbReference type="GO" id="GO:0005829">
    <property type="term" value="C:cytosol"/>
    <property type="evidence" value="ECO:0007669"/>
    <property type="project" value="TreeGrafter"/>
</dbReference>
<dbReference type="GO" id="GO:0004056">
    <property type="term" value="F:argininosuccinate lyase activity"/>
    <property type="evidence" value="ECO:0007669"/>
    <property type="project" value="UniProtKB-UniRule"/>
</dbReference>
<dbReference type="GO" id="GO:0042450">
    <property type="term" value="P:arginine biosynthetic process via ornithine"/>
    <property type="evidence" value="ECO:0007669"/>
    <property type="project" value="InterPro"/>
</dbReference>
<dbReference type="GO" id="GO:0006526">
    <property type="term" value="P:L-arginine biosynthetic process"/>
    <property type="evidence" value="ECO:0007669"/>
    <property type="project" value="UniProtKB-UniRule"/>
</dbReference>
<dbReference type="CDD" id="cd01359">
    <property type="entry name" value="Argininosuccinate_lyase"/>
    <property type="match status" value="1"/>
</dbReference>
<dbReference type="FunFam" id="1.10.275.10:FF:000002">
    <property type="entry name" value="Argininosuccinate lyase"/>
    <property type="match status" value="1"/>
</dbReference>
<dbReference type="FunFam" id="1.10.40.30:FF:000001">
    <property type="entry name" value="Argininosuccinate lyase"/>
    <property type="match status" value="1"/>
</dbReference>
<dbReference type="FunFam" id="1.20.200.10:FF:000015">
    <property type="entry name" value="argininosuccinate lyase isoform X2"/>
    <property type="match status" value="1"/>
</dbReference>
<dbReference type="Gene3D" id="1.10.40.30">
    <property type="entry name" value="Fumarase/aspartase (C-terminal domain)"/>
    <property type="match status" value="1"/>
</dbReference>
<dbReference type="Gene3D" id="1.20.200.10">
    <property type="entry name" value="Fumarase/aspartase (Central domain)"/>
    <property type="match status" value="1"/>
</dbReference>
<dbReference type="Gene3D" id="1.10.275.10">
    <property type="entry name" value="Fumarase/aspartase (N-terminal domain)"/>
    <property type="match status" value="1"/>
</dbReference>
<dbReference type="HAMAP" id="MF_00006">
    <property type="entry name" value="Arg_succ_lyase"/>
    <property type="match status" value="1"/>
</dbReference>
<dbReference type="InterPro" id="IPR029419">
    <property type="entry name" value="Arg_succ_lyase_C"/>
</dbReference>
<dbReference type="InterPro" id="IPR009049">
    <property type="entry name" value="Argininosuccinate_lyase"/>
</dbReference>
<dbReference type="InterPro" id="IPR024083">
    <property type="entry name" value="Fumarase/histidase_N"/>
</dbReference>
<dbReference type="InterPro" id="IPR020557">
    <property type="entry name" value="Fumarate_lyase_CS"/>
</dbReference>
<dbReference type="InterPro" id="IPR000362">
    <property type="entry name" value="Fumarate_lyase_fam"/>
</dbReference>
<dbReference type="InterPro" id="IPR022761">
    <property type="entry name" value="Fumarate_lyase_N"/>
</dbReference>
<dbReference type="InterPro" id="IPR008948">
    <property type="entry name" value="L-Aspartase-like"/>
</dbReference>
<dbReference type="NCBIfam" id="TIGR00838">
    <property type="entry name" value="argH"/>
    <property type="match status" value="1"/>
</dbReference>
<dbReference type="PANTHER" id="PTHR43814">
    <property type="entry name" value="ARGININOSUCCINATE LYASE"/>
    <property type="match status" value="1"/>
</dbReference>
<dbReference type="PANTHER" id="PTHR43814:SF1">
    <property type="entry name" value="ARGININOSUCCINATE LYASE"/>
    <property type="match status" value="1"/>
</dbReference>
<dbReference type="Pfam" id="PF14698">
    <property type="entry name" value="ASL_C2"/>
    <property type="match status" value="1"/>
</dbReference>
<dbReference type="Pfam" id="PF00206">
    <property type="entry name" value="Lyase_1"/>
    <property type="match status" value="1"/>
</dbReference>
<dbReference type="PRINTS" id="PR00145">
    <property type="entry name" value="ARGSUCLYASE"/>
</dbReference>
<dbReference type="PRINTS" id="PR00149">
    <property type="entry name" value="FUMRATELYASE"/>
</dbReference>
<dbReference type="SUPFAM" id="SSF48557">
    <property type="entry name" value="L-aspartase-like"/>
    <property type="match status" value="1"/>
</dbReference>
<dbReference type="PROSITE" id="PS00163">
    <property type="entry name" value="FUMARATE_LYASES"/>
    <property type="match status" value="1"/>
</dbReference>
<accession>Q8XWV7</accession>
<gene>
    <name evidence="1" type="primary">argH</name>
    <name type="ordered locus">RSc2363</name>
    <name type="ORF">RS01183</name>
</gene>
<organism>
    <name type="scientific">Ralstonia nicotianae (strain ATCC BAA-1114 / GMI1000)</name>
    <name type="common">Ralstonia solanacearum</name>
    <dbReference type="NCBI Taxonomy" id="267608"/>
    <lineage>
        <taxon>Bacteria</taxon>
        <taxon>Pseudomonadati</taxon>
        <taxon>Pseudomonadota</taxon>
        <taxon>Betaproteobacteria</taxon>
        <taxon>Burkholderiales</taxon>
        <taxon>Burkholderiaceae</taxon>
        <taxon>Ralstonia</taxon>
        <taxon>Ralstonia solanacearum species complex</taxon>
    </lineage>
</organism>